<keyword id="KW-0025">Alternative splicing</keyword>
<keyword id="KW-1003">Cell membrane</keyword>
<keyword id="KW-1015">Disulfide bond</keyword>
<keyword id="KW-0325">Glycoprotein</keyword>
<keyword id="KW-0407">Ion channel</keyword>
<keyword id="KW-0406">Ion transport</keyword>
<keyword id="KW-1071">Ligand-gated ion channel</keyword>
<keyword id="KW-0472">Membrane</keyword>
<keyword id="KW-0628">Postsynaptic cell membrane</keyword>
<keyword id="KW-0675">Receptor</keyword>
<keyword id="KW-1185">Reference proteome</keyword>
<keyword id="KW-0732">Signal</keyword>
<keyword id="KW-0770">Synapse</keyword>
<keyword id="KW-0812">Transmembrane</keyword>
<keyword id="KW-1133">Transmembrane helix</keyword>
<keyword id="KW-0813">Transport</keyword>
<comment type="function">
    <text evidence="7">Forms serotonin (5-hydroxytryptamine/5-HT3)-activated cation-selective channel complexes, which when activated cause fast, depolarizing responses in neurons.</text>
</comment>
<comment type="catalytic activity">
    <reaction evidence="3">
        <text>Na(+)(in) = Na(+)(out)</text>
        <dbReference type="Rhea" id="RHEA:34963"/>
        <dbReference type="ChEBI" id="CHEBI:29101"/>
    </reaction>
</comment>
<comment type="catalytic activity">
    <reaction evidence="3">
        <text>K(+)(in) = K(+)(out)</text>
        <dbReference type="Rhea" id="RHEA:29463"/>
        <dbReference type="ChEBI" id="CHEBI:29103"/>
    </reaction>
</comment>
<comment type="catalytic activity">
    <reaction evidence="7">
        <text>Ca(2+)(in) = Ca(2+)(out)</text>
        <dbReference type="Rhea" id="RHEA:29671"/>
        <dbReference type="ChEBI" id="CHEBI:29108"/>
    </reaction>
</comment>
<comment type="subunit">
    <text evidence="7">Forms homopentameric as well as heteropentameric serotonin-activated cation-selective channel complexes with HTR3A. The homomeric complex is not functional. Heteropentameric complexes display properties which resemble that of neuronal serotonin-activated channels in vivo.</text>
</comment>
<comment type="interaction">
    <interactant intactId="EBI-11174612">
        <id>A5X5Y0-1</id>
    </interactant>
    <interactant intactId="EBI-9008743">
        <id>P46098</id>
        <label>HTR3A</label>
    </interactant>
    <organismsDiffer>false</organismsDiffer>
    <experiments>5</experiments>
</comment>
<comment type="interaction">
    <interactant intactId="EBI-11163690">
        <id>A5X5Y0-3</id>
    </interactant>
    <interactant intactId="EBI-9008743">
        <id>P46098</id>
        <label>HTR3A</label>
    </interactant>
    <organismsDiffer>false</organismsDiffer>
    <experiments>3</experiments>
</comment>
<comment type="subcellular location">
    <subcellularLocation>
        <location evidence="15">Postsynaptic cell membrane</location>
        <topology evidence="4">Multi-pass membrane protein</topology>
    </subcellularLocation>
    <subcellularLocation>
        <location evidence="7 8">Cell membrane</location>
        <topology evidence="4">Multi-pass membrane protein</topology>
    </subcellularLocation>
    <text evidence="7">Presumably retained within the endoplasmic reticulum unless complexed with HTR3A.</text>
</comment>
<comment type="alternative products">
    <event type="alternative splicing"/>
    <isoform>
        <id>A5X5Y0-1</id>
        <name>1</name>
        <sequence type="displayed"/>
    </isoform>
    <isoform>
        <id>A5X5Y0-2</id>
        <name>2</name>
        <name>5-HT3c1</name>
        <sequence type="described" ref="VSP_029804"/>
    </isoform>
    <isoform>
        <id>A5X5Y0-3</id>
        <name>3</name>
        <sequence type="described" ref="VSP_029803"/>
    </isoform>
    <isoform>
        <id>A5X5Y0-4</id>
        <name>4</name>
        <name>5-HT3c1 long</name>
        <sequence type="described" ref="VSP_029803 VSP_029804"/>
    </isoform>
    <isoform>
        <id>A5X5Y0-6</id>
        <name>5</name>
        <name>HTR3E_V3</name>
        <sequence type="described" ref="VSP_029803 VSP_029804 VSP_045573"/>
    </isoform>
</comment>
<comment type="tissue specificity">
    <text evidence="5 6">Expressed in adult colon and intestine.</text>
</comment>
<comment type="domain">
    <text evidence="2">The HA-stretch region of HTR3E seems to confer increased conductance to HTR3A/HTR3E heteropentamers compared to that of HTR3A homopentamers.</text>
</comment>
<comment type="similarity">
    <text evidence="14">Belongs to the ligand-gated ion channel (TC 1.A.9) family. 5-hydroxytryptamine receptor (TC 1.A.9.2) subfamily. HTR3E sub-subfamily.</text>
</comment>
<sequence length="456" mass="51438">MEGSWFHRKRFSFYLLLGFLLQGRGVTFTINCSGFGQHGADPTALNSVFNRKPFRPVTNISVPTQVNISFAMSAILDVNEQLHLLSSFLWLEMVWDNPFISWNPEECEGITKMSMAAKNLWLPDIFIIELMDVDKTPKGLTAYVSNEGRIRYKKPMKVDSICNLDIFYFPFDQQNCTLTFSSFLYTVDSMLLDMEKEVWEITDASRNILQTHGEWELLGLSKATAKLSRGGNLYDQIVFYVAIRRRPSLYVINLLVPSGFLVAIDALSFYLPVKSGNRVPFKITLLLGYNVFLLMMSDLLPTSGTPLIGVYFALCLSLMVGSLLETIFITHLLHVATTQPPPLPRWLHSLLLHCNSPGRCCPTAPQKENKGPGLTPTHLPGVKEPEVSAGQMPGPAEAELTGGSEWTRAQREHEAQKQHSVELWLQFSHAMDAMLFRLYLLFMASSIITVICLWNT</sequence>
<feature type="signal peptide" evidence="4">
    <location>
        <begin position="1"/>
        <end position="25"/>
    </location>
</feature>
<feature type="chain" id="PRO_0000312294" description="5-hydroxytryptamine receptor 3E">
    <location>
        <begin position="26"/>
        <end position="456"/>
    </location>
</feature>
<feature type="topological domain" description="Extracellular" evidence="4">
    <location>
        <begin position="26"/>
        <end position="248"/>
    </location>
</feature>
<feature type="transmembrane region" description="Helical; Name=1" evidence="4">
    <location>
        <begin position="249"/>
        <end position="269"/>
    </location>
</feature>
<feature type="topological domain" description="Cytoplasmic" evidence="4">
    <location>
        <begin position="270"/>
        <end position="282"/>
    </location>
</feature>
<feature type="transmembrane region" description="Helical; Name=2" evidence="4">
    <location>
        <begin position="283"/>
        <end position="303"/>
    </location>
</feature>
<feature type="topological domain" description="Extracellular" evidence="4">
    <location>
        <begin position="304"/>
        <end position="307"/>
    </location>
</feature>
<feature type="transmembrane region" description="Helical; Name=3" evidence="4">
    <location>
        <begin position="308"/>
        <end position="328"/>
    </location>
</feature>
<feature type="topological domain" description="Cytoplasmic" evidence="4">
    <location>
        <begin position="329"/>
        <end position="433"/>
    </location>
</feature>
<feature type="transmembrane region" description="Helical; Name=4" evidence="4">
    <location>
        <begin position="434"/>
        <end position="454"/>
    </location>
</feature>
<feature type="topological domain" description="Extracellular" evidence="4">
    <location>
        <begin position="455"/>
        <end position="456"/>
    </location>
</feature>
<feature type="region of interest" description="HA-stretch; determines single-channel conductance in 5-HT3 receptors" evidence="3">
    <location>
        <begin position="401"/>
        <end position="432"/>
    </location>
</feature>
<feature type="glycosylation site" description="N-linked (GlcNAc...) asparagine" evidence="4">
    <location>
        <position position="175"/>
    </location>
</feature>
<feature type="disulfide bond" evidence="1">
    <location>
        <begin position="162"/>
        <end position="176"/>
    </location>
</feature>
<feature type="splice variant" id="VSP_029803" description="In isoform 3, isoform 4 and isoform 5." evidence="9 10 11 12 13">
    <original>MEGSWFHRKRFSFYLLLGFLLQ</original>
    <variation>MLAFILSRATPRPALGPLSYREHRVALLHLTHSMSTT</variation>
    <location>
        <begin position="1"/>
        <end position="22"/>
    </location>
</feature>
<feature type="splice variant" id="VSP_029804" description="In isoform 2, isoform 4 and isoform 5." evidence="10 13">
    <location>
        <begin position="79"/>
        <end position="93"/>
    </location>
</feature>
<feature type="splice variant" id="VSP_045573" description="In isoform 5." evidence="13">
    <original>E</original>
    <variation>ELCVSRAGQREVPSPGSHRDHSLPLGP</variation>
    <location>
        <position position="129"/>
    </location>
</feature>
<feature type="sequence variant" id="VAR_037481" description="In dbSNP:rs7627615." evidence="8">
    <original>A</original>
    <variation>T</variation>
    <location>
        <position position="71"/>
    </location>
</feature>
<feature type="sequence variant" id="VAR_037482" description="In dbSNP:rs13324468.">
    <original>A</original>
    <variation>T</variation>
    <location>
        <position position="430"/>
    </location>
</feature>
<feature type="sequence conflict" description="In Ref. 6; AAI01183/AAI01184." evidence="14" ref="6">
    <original>A</original>
    <variation>T</variation>
    <location>
        <position position="44"/>
    </location>
</feature>
<dbReference type="EMBL" id="AY349352">
    <property type="protein sequence ID" value="AAQ93476.1"/>
    <property type="molecule type" value="mRNA"/>
</dbReference>
<dbReference type="EMBL" id="AY349353">
    <property type="protein sequence ID" value="AAQ93477.1"/>
    <property type="molecule type" value="mRNA"/>
</dbReference>
<dbReference type="EMBL" id="AY159813">
    <property type="protein sequence ID" value="AAO38167.2"/>
    <property type="molecule type" value="mRNA"/>
</dbReference>
<dbReference type="EMBL" id="DQ644022">
    <property type="protein sequence ID" value="ABG35128.1"/>
    <property type="molecule type" value="mRNA"/>
</dbReference>
<dbReference type="EMBL" id="EU165354">
    <property type="protein sequence ID" value="ABW05298.1"/>
    <property type="molecule type" value="mRNA"/>
</dbReference>
<dbReference type="EMBL" id="AC131235">
    <property type="status" value="NOT_ANNOTATED_CDS"/>
    <property type="molecule type" value="Genomic_DNA"/>
</dbReference>
<dbReference type="EMBL" id="BC101182">
    <property type="protein sequence ID" value="AAI01183.1"/>
    <property type="molecule type" value="mRNA"/>
</dbReference>
<dbReference type="EMBL" id="BC101183">
    <property type="protein sequence ID" value="AAI01184.1"/>
    <property type="molecule type" value="mRNA"/>
</dbReference>
<dbReference type="EMBL" id="BC101185">
    <property type="protein sequence ID" value="AAI01186.1"/>
    <property type="molecule type" value="mRNA"/>
</dbReference>
<dbReference type="CCDS" id="CCDS3251.1">
    <molecule id="A5X5Y0-3"/>
</dbReference>
<dbReference type="CCDS" id="CCDS58868.1">
    <molecule id="A5X5Y0-1"/>
</dbReference>
<dbReference type="CCDS" id="CCDS58869.1">
    <molecule id="A5X5Y0-2"/>
</dbReference>
<dbReference type="CCDS" id="CCDS58870.1">
    <molecule id="A5X5Y0-4"/>
</dbReference>
<dbReference type="CCDS" id="CCDS58871.1">
    <molecule id="A5X5Y0-6"/>
</dbReference>
<dbReference type="RefSeq" id="NP_001243542.1">
    <molecule id="A5X5Y0-1"/>
    <property type="nucleotide sequence ID" value="NM_001256613.2"/>
</dbReference>
<dbReference type="RefSeq" id="NP_001243543.1">
    <molecule id="A5X5Y0-6"/>
    <property type="nucleotide sequence ID" value="NM_001256614.1"/>
</dbReference>
<dbReference type="RefSeq" id="NP_872395.2">
    <molecule id="A5X5Y0-3"/>
    <property type="nucleotide sequence ID" value="NM_182589.2"/>
</dbReference>
<dbReference type="RefSeq" id="NP_938055.1">
    <molecule id="A5X5Y0-2"/>
    <property type="nucleotide sequence ID" value="NM_198313.3"/>
</dbReference>
<dbReference type="RefSeq" id="NP_938056.1">
    <molecule id="A5X5Y0-4"/>
    <property type="nucleotide sequence ID" value="NM_198314.2"/>
</dbReference>
<dbReference type="SMR" id="A5X5Y0"/>
<dbReference type="BioGRID" id="130056">
    <property type="interactions" value="10"/>
</dbReference>
<dbReference type="ComplexPortal" id="CPX-273">
    <property type="entry name" value="5-hydroxytryptamine-3A/E receptor complex"/>
</dbReference>
<dbReference type="CORUM" id="A5X5Y0"/>
<dbReference type="FunCoup" id="A5X5Y0">
    <property type="interactions" value="207"/>
</dbReference>
<dbReference type="IntAct" id="A5X5Y0">
    <property type="interactions" value="5"/>
</dbReference>
<dbReference type="STRING" id="9606.ENSP00000406050"/>
<dbReference type="BindingDB" id="A5X5Y0"/>
<dbReference type="ChEMBL" id="CHEMBL4296087"/>
<dbReference type="DrugBank" id="DB01239">
    <property type="generic name" value="Chlorprothixene"/>
</dbReference>
<dbReference type="DrugBank" id="DB11273">
    <property type="generic name" value="Dihydroergocornine"/>
</dbReference>
<dbReference type="DrugBank" id="DB13345">
    <property type="generic name" value="Dihydroergocristine"/>
</dbReference>
<dbReference type="DrugBank" id="DB01049">
    <property type="generic name" value="Ergoloid mesylate"/>
</dbReference>
<dbReference type="DrugBank" id="DB00898">
    <property type="generic name" value="Ethanol"/>
</dbReference>
<dbReference type="DrugBank" id="DB12141">
    <property type="generic name" value="Gilteritinib"/>
</dbReference>
<dbReference type="DrugBank" id="DB00715">
    <property type="generic name" value="Paroxetine"/>
</dbReference>
<dbReference type="DrugBank" id="DB09304">
    <property type="generic name" value="Setiptiline"/>
</dbReference>
<dbReference type="DrugBank" id="DB13025">
    <property type="generic name" value="Tiapride"/>
</dbReference>
<dbReference type="DrugBank" id="DB00246">
    <property type="generic name" value="Ziprasidone"/>
</dbReference>
<dbReference type="DrugCentral" id="A5X5Y0"/>
<dbReference type="GlyCosmos" id="A5X5Y0">
    <property type="glycosylation" value="1 site, No reported glycans"/>
</dbReference>
<dbReference type="GlyGen" id="A5X5Y0">
    <property type="glycosylation" value="1 site"/>
</dbReference>
<dbReference type="iPTMnet" id="A5X5Y0"/>
<dbReference type="PhosphoSitePlus" id="A5X5Y0"/>
<dbReference type="BioMuta" id="HTR3E"/>
<dbReference type="MassIVE" id="A5X5Y0"/>
<dbReference type="PaxDb" id="9606-ENSP00000406050"/>
<dbReference type="PeptideAtlas" id="A5X5Y0"/>
<dbReference type="Antibodypedia" id="33787">
    <property type="antibodies" value="122 antibodies from 17 providers"/>
</dbReference>
<dbReference type="DNASU" id="285242"/>
<dbReference type="Ensembl" id="ENST00000335304.6">
    <molecule id="A5X5Y0-3"/>
    <property type="protein sequence ID" value="ENSP00000335511.2"/>
    <property type="gene ID" value="ENSG00000186038.9"/>
</dbReference>
<dbReference type="Ensembl" id="ENST00000415389.6">
    <molecule id="A5X5Y0-1"/>
    <property type="protein sequence ID" value="ENSP00000401444.2"/>
    <property type="gene ID" value="ENSG00000186038.9"/>
</dbReference>
<dbReference type="Ensembl" id="ENST00000425359.6">
    <molecule id="A5X5Y0-2"/>
    <property type="protein sequence ID" value="ENSP00000401900.2"/>
    <property type="gene ID" value="ENSG00000186038.9"/>
</dbReference>
<dbReference type="Ensembl" id="ENST00000436361.6">
    <molecule id="A5X5Y0-4"/>
    <property type="protein sequence ID" value="ENSP00000395833.2"/>
    <property type="gene ID" value="ENSG00000186038.9"/>
</dbReference>
<dbReference type="Ensembl" id="ENST00000440596.2">
    <molecule id="A5X5Y0-6"/>
    <property type="protein sequence ID" value="ENSP00000406050.2"/>
    <property type="gene ID" value="ENSG00000186038.9"/>
</dbReference>
<dbReference type="GeneID" id="285242"/>
<dbReference type="KEGG" id="hsa:285242"/>
<dbReference type="MANE-Select" id="ENST00000415389.6">
    <property type="protein sequence ID" value="ENSP00000401444.2"/>
    <property type="RefSeq nucleotide sequence ID" value="NM_001256613.2"/>
    <property type="RefSeq protein sequence ID" value="NP_001243542.1"/>
</dbReference>
<dbReference type="UCSC" id="uc003fml.5">
    <molecule id="A5X5Y0-1"/>
    <property type="organism name" value="human"/>
</dbReference>
<dbReference type="AGR" id="HGNC:24005"/>
<dbReference type="CTD" id="285242"/>
<dbReference type="DisGeNET" id="285242"/>
<dbReference type="GeneCards" id="HTR3E"/>
<dbReference type="HGNC" id="HGNC:24005">
    <property type="gene designation" value="HTR3E"/>
</dbReference>
<dbReference type="HPA" id="ENSG00000186038">
    <property type="expression patterns" value="Not detected"/>
</dbReference>
<dbReference type="MIM" id="610123">
    <property type="type" value="gene"/>
</dbReference>
<dbReference type="neXtProt" id="NX_A5X5Y0"/>
<dbReference type="OpenTargets" id="ENSG00000186038"/>
<dbReference type="PharmGKB" id="PA134900226"/>
<dbReference type="VEuPathDB" id="HostDB:ENSG00000186038"/>
<dbReference type="eggNOG" id="KOG3645">
    <property type="taxonomic scope" value="Eukaryota"/>
</dbReference>
<dbReference type="GeneTree" id="ENSGT00940000163899"/>
<dbReference type="HOGENOM" id="CLU_018074_5_2_1"/>
<dbReference type="InParanoid" id="A5X5Y0"/>
<dbReference type="OMA" id="QFWIPDI"/>
<dbReference type="OrthoDB" id="6097796at2759"/>
<dbReference type="PAN-GO" id="A5X5Y0">
    <property type="GO annotations" value="11 GO annotations based on evolutionary models"/>
</dbReference>
<dbReference type="PhylomeDB" id="A5X5Y0"/>
<dbReference type="TreeFam" id="TF315605"/>
<dbReference type="PathwayCommons" id="A5X5Y0"/>
<dbReference type="Reactome" id="R-HSA-112314">
    <property type="pathway name" value="Neurotransmitter receptors and postsynaptic signal transmission"/>
</dbReference>
<dbReference type="SignaLink" id="A5X5Y0"/>
<dbReference type="SIGNOR" id="A5X5Y0"/>
<dbReference type="BioGRID-ORCS" id="285242">
    <property type="hits" value="10 hits in 1140 CRISPR screens"/>
</dbReference>
<dbReference type="GeneWiki" id="HTR3E"/>
<dbReference type="GenomeRNAi" id="285242"/>
<dbReference type="Pharos" id="A5X5Y0">
    <property type="development level" value="Tchem"/>
</dbReference>
<dbReference type="PRO" id="PR:A5X5Y0"/>
<dbReference type="Proteomes" id="UP000005640">
    <property type="component" value="Chromosome 3"/>
</dbReference>
<dbReference type="RNAct" id="A5X5Y0">
    <property type="molecule type" value="protein"/>
</dbReference>
<dbReference type="Bgee" id="ENSG00000186038">
    <property type="expression patterns" value="Expressed in mucosa of transverse colon and 16 other cell types or tissues"/>
</dbReference>
<dbReference type="ExpressionAtlas" id="A5X5Y0">
    <property type="expression patterns" value="baseline and differential"/>
</dbReference>
<dbReference type="GO" id="GO:0043005">
    <property type="term" value="C:neuron projection"/>
    <property type="evidence" value="ECO:0000318"/>
    <property type="project" value="GO_Central"/>
</dbReference>
<dbReference type="GO" id="GO:0005886">
    <property type="term" value="C:plasma membrane"/>
    <property type="evidence" value="ECO:0000314"/>
    <property type="project" value="UniProt"/>
</dbReference>
<dbReference type="GO" id="GO:0045211">
    <property type="term" value="C:postsynaptic membrane"/>
    <property type="evidence" value="ECO:0007669"/>
    <property type="project" value="UniProtKB-SubCell"/>
</dbReference>
<dbReference type="GO" id="GO:1904602">
    <property type="term" value="C:serotonin-activated cation-selective channel complex"/>
    <property type="evidence" value="ECO:0000353"/>
    <property type="project" value="ComplexPortal"/>
</dbReference>
<dbReference type="GO" id="GO:0045202">
    <property type="term" value="C:synapse"/>
    <property type="evidence" value="ECO:0000318"/>
    <property type="project" value="GO_Central"/>
</dbReference>
<dbReference type="GO" id="GO:1902495">
    <property type="term" value="C:transmembrane transporter complex"/>
    <property type="evidence" value="ECO:0000318"/>
    <property type="project" value="GO_Central"/>
</dbReference>
<dbReference type="GO" id="GO:0005231">
    <property type="term" value="F:excitatory extracellular ligand-gated monoatomic ion channel activity"/>
    <property type="evidence" value="ECO:0000318"/>
    <property type="project" value="GO_Central"/>
</dbReference>
<dbReference type="GO" id="GO:0022850">
    <property type="term" value="F:serotonin-gated monoatomic cation channel activity"/>
    <property type="evidence" value="ECO:0000314"/>
    <property type="project" value="CACAO"/>
</dbReference>
<dbReference type="GO" id="GO:1904315">
    <property type="term" value="F:transmitter-gated monoatomic ion channel activity involved in regulation of postsynaptic membrane potential"/>
    <property type="evidence" value="ECO:0000318"/>
    <property type="project" value="GO_Central"/>
</dbReference>
<dbReference type="GO" id="GO:0007268">
    <property type="term" value="P:chemical synaptic transmission"/>
    <property type="evidence" value="ECO:0000318"/>
    <property type="project" value="GO_Central"/>
</dbReference>
<dbReference type="GO" id="GO:0098662">
    <property type="term" value="P:inorganic cation transmembrane transport"/>
    <property type="evidence" value="ECO:0000314"/>
    <property type="project" value="ComplexPortal"/>
</dbReference>
<dbReference type="GO" id="GO:0034220">
    <property type="term" value="P:monoatomic ion transmembrane transport"/>
    <property type="evidence" value="ECO:0000318"/>
    <property type="project" value="GO_Central"/>
</dbReference>
<dbReference type="GO" id="GO:0042391">
    <property type="term" value="P:regulation of membrane potential"/>
    <property type="evidence" value="ECO:0000318"/>
    <property type="project" value="GO_Central"/>
</dbReference>
<dbReference type="GO" id="GO:0007210">
    <property type="term" value="P:serotonin receptor signaling pathway"/>
    <property type="evidence" value="ECO:0000314"/>
    <property type="project" value="ComplexPortal"/>
</dbReference>
<dbReference type="GO" id="GO:0140227">
    <property type="term" value="P:serotonin-gated cation-selective signaling pathway"/>
    <property type="evidence" value="ECO:0000314"/>
    <property type="project" value="UniProt"/>
</dbReference>
<dbReference type="CDD" id="cd19013">
    <property type="entry name" value="LGIC_ECD_5-HT3C_E"/>
    <property type="match status" value="1"/>
</dbReference>
<dbReference type="CDD" id="cd19063">
    <property type="entry name" value="LGIC_TM_5-HT3"/>
    <property type="match status" value="1"/>
</dbReference>
<dbReference type="FunFam" id="1.20.58.390:FF:000042">
    <property type="entry name" value="5-hydroxytryptamine receptor 3C"/>
    <property type="match status" value="1"/>
</dbReference>
<dbReference type="FunFam" id="2.70.170.10:FF:000026">
    <property type="entry name" value="5-hydroxytryptamine receptor 3C"/>
    <property type="match status" value="1"/>
</dbReference>
<dbReference type="Gene3D" id="2.70.170.10">
    <property type="entry name" value="Neurotransmitter-gated ion-channel ligand-binding domain"/>
    <property type="match status" value="1"/>
</dbReference>
<dbReference type="Gene3D" id="1.20.58.390">
    <property type="entry name" value="Neurotransmitter-gated ion-channel transmembrane domain"/>
    <property type="match status" value="1"/>
</dbReference>
<dbReference type="InterPro" id="IPR049944">
    <property type="entry name" value="LGIC_TM_5-HT3"/>
</dbReference>
<dbReference type="InterPro" id="IPR006202">
    <property type="entry name" value="Neur_chan_lig-bd"/>
</dbReference>
<dbReference type="InterPro" id="IPR036734">
    <property type="entry name" value="Neur_chan_lig-bd_sf"/>
</dbReference>
<dbReference type="InterPro" id="IPR006201">
    <property type="entry name" value="Neur_channel"/>
</dbReference>
<dbReference type="InterPro" id="IPR036719">
    <property type="entry name" value="Neuro-gated_channel_TM_sf"/>
</dbReference>
<dbReference type="InterPro" id="IPR038050">
    <property type="entry name" value="Neuro_actylchol_rec"/>
</dbReference>
<dbReference type="InterPro" id="IPR006029">
    <property type="entry name" value="Neurotrans-gated_channel_TM"/>
</dbReference>
<dbReference type="InterPro" id="IPR018000">
    <property type="entry name" value="Neurotransmitter_ion_chnl_CS"/>
</dbReference>
<dbReference type="PANTHER" id="PTHR18945">
    <property type="entry name" value="NEUROTRANSMITTER GATED ION CHANNEL"/>
    <property type="match status" value="1"/>
</dbReference>
<dbReference type="Pfam" id="PF02931">
    <property type="entry name" value="Neur_chan_LBD"/>
    <property type="match status" value="1"/>
</dbReference>
<dbReference type="Pfam" id="PF02932">
    <property type="entry name" value="Neur_chan_memb"/>
    <property type="match status" value="1"/>
</dbReference>
<dbReference type="PRINTS" id="PR00252">
    <property type="entry name" value="NRIONCHANNEL"/>
</dbReference>
<dbReference type="SUPFAM" id="SSF90112">
    <property type="entry name" value="Neurotransmitter-gated ion-channel transmembrane pore"/>
    <property type="match status" value="1"/>
</dbReference>
<dbReference type="SUPFAM" id="SSF63712">
    <property type="entry name" value="Nicotinic receptor ligand binding domain-like"/>
    <property type="match status" value="1"/>
</dbReference>
<dbReference type="PROSITE" id="PS00236">
    <property type="entry name" value="NEUROTR_ION_CHANNEL"/>
    <property type="match status" value="1"/>
</dbReference>
<reference key="1">
    <citation type="journal article" date="2003" name="Gene">
        <title>Cloning, physical mapping and expression analysis of the human 5-HT3 serotonin receptor-like genes HTR3C, HTR3D and HTR3E.</title>
        <authorList>
            <person name="Niesler B."/>
            <person name="Frank B."/>
            <person name="Kapeller J."/>
            <person name="Rappold G.A."/>
        </authorList>
    </citation>
    <scope>NUCLEOTIDE SEQUENCE [MRNA] (ISOFORM 3)</scope>
    <scope>TISSUE SPECIFICITY</scope>
</reference>
<reference key="2">
    <citation type="journal article" date="2003" name="Gene">
        <title>A cluster of novel serotonin receptor 3-like genes on human chromosome 3.</title>
        <authorList>
            <person name="Karnovsky A.M."/>
            <person name="Gotow L.F."/>
            <person name="McKinley D.D."/>
            <person name="Piechan J.L."/>
            <person name="Ruble C.L."/>
            <person name="Mills C.J."/>
            <person name="Schellin K.A.B."/>
            <person name="Slightom J.L."/>
            <person name="Fitzgerald L.R."/>
            <person name="Benjamin C.W."/>
            <person name="Roberds S.L."/>
        </authorList>
    </citation>
    <scope>NUCLEOTIDE SEQUENCE [MRNA] (ISOFORMS 2 AND 4)</scope>
    <scope>TISSUE SPECIFICITY</scope>
</reference>
<reference key="3">
    <citation type="journal article" date="2007" name="Mol. Pharmacol.">
        <title>Characterization of the novel human serotonin receptor subunits 5-HT3C, 5-HT3D, and 5-HT3E.</title>
        <authorList>
            <person name="Niesler B."/>
            <person name="Walstab J."/>
            <person name="Combrink S."/>
            <person name="Moeller D."/>
            <person name="Kapeller J."/>
            <person name="Rietdorf J."/>
            <person name="Boenisch H."/>
            <person name="Goethert M."/>
            <person name="Rappold G."/>
            <person name="Bruess M."/>
        </authorList>
    </citation>
    <scope>NUCLEOTIDE SEQUENCE [MRNA] (ISOFORMS 1 AND 3)</scope>
    <scope>FUNCTION</scope>
    <scope>TRANSPORTER ACTIVITY</scope>
    <scope>SUBUNIT</scope>
    <scope>SUBCELLULAR LOCATION</scope>
</reference>
<reference key="4">
    <citation type="journal article" date="2009" name="J. Neurochem.">
        <title>Characterisation of 5-HT3C, 5-HT3D and 5-HT3E receptor subunits: evolution, distribution and function.</title>
        <authorList>
            <person name="Holbrook J.D."/>
            <person name="Gill C.H."/>
            <person name="Zebda N."/>
            <person name="Spencer J.P."/>
            <person name="Leyland R."/>
            <person name="Rance K.H."/>
            <person name="Trinh H."/>
            <person name="Balmer G."/>
            <person name="Kelly F.M."/>
            <person name="Yusaf S.P."/>
            <person name="Courtenay N."/>
            <person name="Luck J."/>
            <person name="Rhodes A."/>
            <person name="Modha S."/>
            <person name="Moore S.E."/>
            <person name="Sanger G.J."/>
            <person name="Gunthorpe M.J."/>
        </authorList>
    </citation>
    <scope>NUCLEOTIDE SEQUENCE [MRNA] (ISOFORM 5)</scope>
    <scope>ALTERNATIVE SPLICING</scope>
    <scope>SUBCELLULAR LOCATION</scope>
    <scope>VARIANT THR-71</scope>
</reference>
<reference key="5">
    <citation type="journal article" date="2006" name="Nature">
        <title>The DNA sequence, annotation and analysis of human chromosome 3.</title>
        <authorList>
            <person name="Muzny D.M."/>
            <person name="Scherer S.E."/>
            <person name="Kaul R."/>
            <person name="Wang J."/>
            <person name="Yu J."/>
            <person name="Sudbrak R."/>
            <person name="Buhay C.J."/>
            <person name="Chen R."/>
            <person name="Cree A."/>
            <person name="Ding Y."/>
            <person name="Dugan-Rocha S."/>
            <person name="Gill R."/>
            <person name="Gunaratne P."/>
            <person name="Harris R.A."/>
            <person name="Hawes A.C."/>
            <person name="Hernandez J."/>
            <person name="Hodgson A.V."/>
            <person name="Hume J."/>
            <person name="Jackson A."/>
            <person name="Khan Z.M."/>
            <person name="Kovar-Smith C."/>
            <person name="Lewis L.R."/>
            <person name="Lozado R.J."/>
            <person name="Metzker M.L."/>
            <person name="Milosavljevic A."/>
            <person name="Miner G.R."/>
            <person name="Morgan M.B."/>
            <person name="Nazareth L.V."/>
            <person name="Scott G."/>
            <person name="Sodergren E."/>
            <person name="Song X.-Z."/>
            <person name="Steffen D."/>
            <person name="Wei S."/>
            <person name="Wheeler D.A."/>
            <person name="Wright M.W."/>
            <person name="Worley K.C."/>
            <person name="Yuan Y."/>
            <person name="Zhang Z."/>
            <person name="Adams C.Q."/>
            <person name="Ansari-Lari M.A."/>
            <person name="Ayele M."/>
            <person name="Brown M.J."/>
            <person name="Chen G."/>
            <person name="Chen Z."/>
            <person name="Clendenning J."/>
            <person name="Clerc-Blankenburg K.P."/>
            <person name="Chen R."/>
            <person name="Chen Z."/>
            <person name="Davis C."/>
            <person name="Delgado O."/>
            <person name="Dinh H.H."/>
            <person name="Dong W."/>
            <person name="Draper H."/>
            <person name="Ernst S."/>
            <person name="Fu G."/>
            <person name="Gonzalez-Garay M.L."/>
            <person name="Garcia D.K."/>
            <person name="Gillett W."/>
            <person name="Gu J."/>
            <person name="Hao B."/>
            <person name="Haugen E."/>
            <person name="Havlak P."/>
            <person name="He X."/>
            <person name="Hennig S."/>
            <person name="Hu S."/>
            <person name="Huang W."/>
            <person name="Jackson L.R."/>
            <person name="Jacob L.S."/>
            <person name="Kelly S.H."/>
            <person name="Kube M."/>
            <person name="Levy R."/>
            <person name="Li Z."/>
            <person name="Liu B."/>
            <person name="Liu J."/>
            <person name="Liu W."/>
            <person name="Lu J."/>
            <person name="Maheshwari M."/>
            <person name="Nguyen B.-V."/>
            <person name="Okwuonu G.O."/>
            <person name="Palmeiri A."/>
            <person name="Pasternak S."/>
            <person name="Perez L.M."/>
            <person name="Phelps K.A."/>
            <person name="Plopper F.J."/>
            <person name="Qiang B."/>
            <person name="Raymond C."/>
            <person name="Rodriguez R."/>
            <person name="Saenphimmachak C."/>
            <person name="Santibanez J."/>
            <person name="Shen H."/>
            <person name="Shen Y."/>
            <person name="Subramanian S."/>
            <person name="Tabor P.E."/>
            <person name="Verduzco D."/>
            <person name="Waldron L."/>
            <person name="Wang J."/>
            <person name="Wang J."/>
            <person name="Wang Q."/>
            <person name="Williams G.A."/>
            <person name="Wong G.K.-S."/>
            <person name="Yao Z."/>
            <person name="Zhang J."/>
            <person name="Zhang X."/>
            <person name="Zhao G."/>
            <person name="Zhou J."/>
            <person name="Zhou Y."/>
            <person name="Nelson D."/>
            <person name="Lehrach H."/>
            <person name="Reinhardt R."/>
            <person name="Naylor S.L."/>
            <person name="Yang H."/>
            <person name="Olson M."/>
            <person name="Weinstock G."/>
            <person name="Gibbs R.A."/>
        </authorList>
    </citation>
    <scope>NUCLEOTIDE SEQUENCE [LARGE SCALE GENOMIC DNA]</scope>
</reference>
<reference key="6">
    <citation type="journal article" date="2004" name="Genome Res.">
        <title>The status, quality, and expansion of the NIH full-length cDNA project: the Mammalian Gene Collection (MGC).</title>
        <authorList>
            <consortium name="The MGC Project Team"/>
        </authorList>
    </citation>
    <scope>NUCLEOTIDE SEQUENCE [LARGE SCALE MRNA] (ISOFORM 3)</scope>
</reference>
<proteinExistence type="evidence at protein level"/>
<organism>
    <name type="scientific">Homo sapiens</name>
    <name type="common">Human</name>
    <dbReference type="NCBI Taxonomy" id="9606"/>
    <lineage>
        <taxon>Eukaryota</taxon>
        <taxon>Metazoa</taxon>
        <taxon>Chordata</taxon>
        <taxon>Craniata</taxon>
        <taxon>Vertebrata</taxon>
        <taxon>Euteleostomi</taxon>
        <taxon>Mammalia</taxon>
        <taxon>Eutheria</taxon>
        <taxon>Euarchontoglires</taxon>
        <taxon>Primates</taxon>
        <taxon>Haplorrhini</taxon>
        <taxon>Catarrhini</taxon>
        <taxon>Hominidae</taxon>
        <taxon>Homo</taxon>
    </lineage>
</organism>
<name>5HT3E_HUMAN</name>
<gene>
    <name evidence="16" type="primary">HTR3E</name>
</gene>
<protein>
    <recommendedName>
        <fullName evidence="15">5-hydroxytryptamine receptor 3E</fullName>
        <shortName>5-HT3-E</shortName>
        <shortName>5-HT3E</shortName>
    </recommendedName>
    <alternativeName>
        <fullName>Serotonin receptor 3E</fullName>
    </alternativeName>
</protein>
<accession>A5X5Y0</accession>
<accession>A8IKD7</accession>
<accession>E9PGF1</accession>
<accession>Q495G1</accession>
<accession>Q495G3</accession>
<accession>Q6V706</accession>
<accession>Q6V707</accession>
<accession>Q7Z6B2</accession>
<evidence type="ECO:0000250" key="1"/>
<evidence type="ECO:0000250" key="2">
    <source>
        <dbReference type="UniProtKB" id="O95264"/>
    </source>
</evidence>
<evidence type="ECO:0000250" key="3">
    <source>
        <dbReference type="UniProtKB" id="P46098"/>
    </source>
</evidence>
<evidence type="ECO:0000255" key="4"/>
<evidence type="ECO:0000269" key="5">
    <source>
    </source>
</evidence>
<evidence type="ECO:0000269" key="6">
    <source>
    </source>
</evidence>
<evidence type="ECO:0000269" key="7">
    <source>
    </source>
</evidence>
<evidence type="ECO:0000269" key="8">
    <source>
    </source>
</evidence>
<evidence type="ECO:0000303" key="9">
    <source>
    </source>
</evidence>
<evidence type="ECO:0000303" key="10">
    <source>
    </source>
</evidence>
<evidence type="ECO:0000303" key="11">
    <source>
    </source>
</evidence>
<evidence type="ECO:0000303" key="12">
    <source>
    </source>
</evidence>
<evidence type="ECO:0000303" key="13">
    <source>
    </source>
</evidence>
<evidence type="ECO:0000305" key="14"/>
<evidence type="ECO:0000305" key="15">
    <source>
    </source>
</evidence>
<evidence type="ECO:0000312" key="16">
    <source>
        <dbReference type="HGNC" id="HGNC:24005"/>
    </source>
</evidence>